<feature type="chain" id="PRO_0000167330" description="UPF0102 protein Atu0303">
    <location>
        <begin position="1"/>
        <end position="122"/>
    </location>
</feature>
<evidence type="ECO:0000305" key="1"/>
<keyword id="KW-1185">Reference proteome</keyword>
<gene>
    <name type="ordered locus">Atu0303</name>
    <name type="ORF">AGR_C_525</name>
</gene>
<reference key="1">
    <citation type="journal article" date="2001" name="Science">
        <title>The genome of the natural genetic engineer Agrobacterium tumefaciens C58.</title>
        <authorList>
            <person name="Wood D.W."/>
            <person name="Setubal J.C."/>
            <person name="Kaul R."/>
            <person name="Monks D.E."/>
            <person name="Kitajima J.P."/>
            <person name="Okura V.K."/>
            <person name="Zhou Y."/>
            <person name="Chen L."/>
            <person name="Wood G.E."/>
            <person name="Almeida N.F. Jr."/>
            <person name="Woo L."/>
            <person name="Chen Y."/>
            <person name="Paulsen I.T."/>
            <person name="Eisen J.A."/>
            <person name="Karp P.D."/>
            <person name="Bovee D. Sr."/>
            <person name="Chapman P."/>
            <person name="Clendenning J."/>
            <person name="Deatherage G."/>
            <person name="Gillet W."/>
            <person name="Grant C."/>
            <person name="Kutyavin T."/>
            <person name="Levy R."/>
            <person name="Li M.-J."/>
            <person name="McClelland E."/>
            <person name="Palmieri A."/>
            <person name="Raymond C."/>
            <person name="Rouse G."/>
            <person name="Saenphimmachak C."/>
            <person name="Wu Z."/>
            <person name="Romero P."/>
            <person name="Gordon D."/>
            <person name="Zhang S."/>
            <person name="Yoo H."/>
            <person name="Tao Y."/>
            <person name="Biddle P."/>
            <person name="Jung M."/>
            <person name="Krespan W."/>
            <person name="Perry M."/>
            <person name="Gordon-Kamm B."/>
            <person name="Liao L."/>
            <person name="Kim S."/>
            <person name="Hendrick C."/>
            <person name="Zhao Z.-Y."/>
            <person name="Dolan M."/>
            <person name="Chumley F."/>
            <person name="Tingey S.V."/>
            <person name="Tomb J.-F."/>
            <person name="Gordon M.P."/>
            <person name="Olson M.V."/>
            <person name="Nester E.W."/>
        </authorList>
    </citation>
    <scope>NUCLEOTIDE SEQUENCE [LARGE SCALE GENOMIC DNA]</scope>
    <source>
        <strain>C58 / ATCC 33970</strain>
    </source>
</reference>
<reference key="2">
    <citation type="journal article" date="2001" name="Science">
        <title>Genome sequence of the plant pathogen and biotechnology agent Agrobacterium tumefaciens C58.</title>
        <authorList>
            <person name="Goodner B."/>
            <person name="Hinkle G."/>
            <person name="Gattung S."/>
            <person name="Miller N."/>
            <person name="Blanchard M."/>
            <person name="Qurollo B."/>
            <person name="Goldman B.S."/>
            <person name="Cao Y."/>
            <person name="Askenazi M."/>
            <person name="Halling C."/>
            <person name="Mullin L."/>
            <person name="Houmiel K."/>
            <person name="Gordon J."/>
            <person name="Vaudin M."/>
            <person name="Iartchouk O."/>
            <person name="Epp A."/>
            <person name="Liu F."/>
            <person name="Wollam C."/>
            <person name="Allinger M."/>
            <person name="Doughty D."/>
            <person name="Scott C."/>
            <person name="Lappas C."/>
            <person name="Markelz B."/>
            <person name="Flanagan C."/>
            <person name="Crowell C."/>
            <person name="Gurson J."/>
            <person name="Lomo C."/>
            <person name="Sear C."/>
            <person name="Strub G."/>
            <person name="Cielo C."/>
            <person name="Slater S."/>
        </authorList>
    </citation>
    <scope>NUCLEOTIDE SEQUENCE [LARGE SCALE GENOMIC DNA]</scope>
    <source>
        <strain>C58 / ATCC 33970</strain>
    </source>
</reference>
<proteinExistence type="inferred from homology"/>
<comment type="similarity">
    <text evidence="1">Belongs to the UPF0102 family.</text>
</comment>
<sequence length="122" mass="13944">MAVDGQSNKRRKAERRGHAAEYWAALYLLLKGYRILAIRYRTRLGEIDLIARKKDLIAIIEVKARASGGSAVDAVGFHSQQRIRAAADLWLSRRRDAGRFSLRFDIVAVLPRRLPQHFIDAF</sequence>
<accession>Q8UIJ2</accession>
<dbReference type="EMBL" id="AE007869">
    <property type="protein sequence ID" value="AAK86118.1"/>
    <property type="molecule type" value="Genomic_DNA"/>
</dbReference>
<dbReference type="PIR" id="AG2613">
    <property type="entry name" value="AG2613"/>
</dbReference>
<dbReference type="PIR" id="E97395">
    <property type="entry name" value="E97395"/>
</dbReference>
<dbReference type="RefSeq" id="NP_353333.1">
    <property type="nucleotide sequence ID" value="NC_003062.2"/>
</dbReference>
<dbReference type="RefSeq" id="WP_010970807.1">
    <property type="nucleotide sequence ID" value="NC_003062.2"/>
</dbReference>
<dbReference type="SMR" id="Q8UIJ2"/>
<dbReference type="STRING" id="176299.Atu0303"/>
<dbReference type="EnsemblBacteria" id="AAK86118">
    <property type="protein sequence ID" value="AAK86118"/>
    <property type="gene ID" value="Atu0303"/>
</dbReference>
<dbReference type="GeneID" id="1132341"/>
<dbReference type="KEGG" id="atu:Atu0303"/>
<dbReference type="PATRIC" id="fig|176299.10.peg.295"/>
<dbReference type="eggNOG" id="COG0792">
    <property type="taxonomic scope" value="Bacteria"/>
</dbReference>
<dbReference type="HOGENOM" id="CLU_115353_0_2_5"/>
<dbReference type="OrthoDB" id="9812968at2"/>
<dbReference type="PhylomeDB" id="Q8UIJ2"/>
<dbReference type="BioCyc" id="AGRO:ATU0303-MONOMER"/>
<dbReference type="Proteomes" id="UP000000813">
    <property type="component" value="Chromosome circular"/>
</dbReference>
<dbReference type="GO" id="GO:0003676">
    <property type="term" value="F:nucleic acid binding"/>
    <property type="evidence" value="ECO:0007669"/>
    <property type="project" value="InterPro"/>
</dbReference>
<dbReference type="Gene3D" id="3.40.1350.10">
    <property type="match status" value="1"/>
</dbReference>
<dbReference type="HAMAP" id="MF_00048">
    <property type="entry name" value="UPF0102"/>
    <property type="match status" value="1"/>
</dbReference>
<dbReference type="InterPro" id="IPR011335">
    <property type="entry name" value="Restrct_endonuc-II-like"/>
</dbReference>
<dbReference type="InterPro" id="IPR011856">
    <property type="entry name" value="tRNA_endonuc-like_dom_sf"/>
</dbReference>
<dbReference type="InterPro" id="IPR003509">
    <property type="entry name" value="UPF0102_YraN-like"/>
</dbReference>
<dbReference type="NCBIfam" id="NF009151">
    <property type="entry name" value="PRK12497.1-5"/>
    <property type="match status" value="1"/>
</dbReference>
<dbReference type="NCBIfam" id="TIGR00252">
    <property type="entry name" value="YraN family protein"/>
    <property type="match status" value="1"/>
</dbReference>
<dbReference type="PANTHER" id="PTHR34039">
    <property type="entry name" value="UPF0102 PROTEIN YRAN"/>
    <property type="match status" value="1"/>
</dbReference>
<dbReference type="PANTHER" id="PTHR34039:SF1">
    <property type="entry name" value="UPF0102 PROTEIN YRAN"/>
    <property type="match status" value="1"/>
</dbReference>
<dbReference type="Pfam" id="PF02021">
    <property type="entry name" value="UPF0102"/>
    <property type="match status" value="1"/>
</dbReference>
<dbReference type="SUPFAM" id="SSF52980">
    <property type="entry name" value="Restriction endonuclease-like"/>
    <property type="match status" value="1"/>
</dbReference>
<organism>
    <name type="scientific">Agrobacterium fabrum (strain C58 / ATCC 33970)</name>
    <name type="common">Agrobacterium tumefaciens (strain C58)</name>
    <dbReference type="NCBI Taxonomy" id="176299"/>
    <lineage>
        <taxon>Bacteria</taxon>
        <taxon>Pseudomonadati</taxon>
        <taxon>Pseudomonadota</taxon>
        <taxon>Alphaproteobacteria</taxon>
        <taxon>Hyphomicrobiales</taxon>
        <taxon>Rhizobiaceae</taxon>
        <taxon>Rhizobium/Agrobacterium group</taxon>
        <taxon>Agrobacterium</taxon>
        <taxon>Agrobacterium tumefaciens complex</taxon>
    </lineage>
</organism>
<protein>
    <recommendedName>
        <fullName>UPF0102 protein Atu0303</fullName>
    </recommendedName>
</protein>
<name>Y303_AGRFC</name>